<accession>Q3ZW89</accession>
<protein>
    <recommendedName>
        <fullName evidence="1">GTPase Obg</fullName>
        <ecNumber evidence="1">3.6.5.-</ecNumber>
    </recommendedName>
    <alternativeName>
        <fullName evidence="1">GTP-binding protein Obg</fullName>
    </alternativeName>
</protein>
<sequence>MFDRVEINIKAGDGGSGKVSFRREKFVPYGGPDGGDGGDGGNVYLEADSGLYSLLNFKHKRVHKASNGEGGMGSRCTGHNGADLVIKVPVGTVATILEENGQKRVLADLAADGDRTLVAHGGQGGLGNTHFVSSTNQAPMLAQKGQPGGEYDLILELKLIADVAIIGYPNVGKSSLLSLLTAAKPKVANYPFTTLSPVMGVIERPEGVFVMAEVPGLIENAHLGKGLGHDFLRHISRTRMVIHLLDGTSENPIDDMIKVNSELYLYDASLSERPQVVAINKIDDELVQLRREELKETFKEAGLEVFFISALTGEGVDVLLAKVAEKLDILKAADISETAPDHEVKIFRPAPKGKMGFRITRLEDGWQVEAPEIERIIEHSDIEDPEVRRQVMVLLKHRSVQQSLIKSGAVIGQKIITGRMEWYL</sequence>
<keyword id="KW-0963">Cytoplasm</keyword>
<keyword id="KW-0342">GTP-binding</keyword>
<keyword id="KW-0378">Hydrolase</keyword>
<keyword id="KW-0460">Magnesium</keyword>
<keyword id="KW-0479">Metal-binding</keyword>
<keyword id="KW-0547">Nucleotide-binding</keyword>
<name>OBG_DEHMC</name>
<organism>
    <name type="scientific">Dehalococcoides mccartyi (strain CBDB1)</name>
    <dbReference type="NCBI Taxonomy" id="255470"/>
    <lineage>
        <taxon>Bacteria</taxon>
        <taxon>Bacillati</taxon>
        <taxon>Chloroflexota</taxon>
        <taxon>Dehalococcoidia</taxon>
        <taxon>Dehalococcoidales</taxon>
        <taxon>Dehalococcoidaceae</taxon>
        <taxon>Dehalococcoides</taxon>
    </lineage>
</organism>
<reference key="1">
    <citation type="journal article" date="2005" name="Nat. Biotechnol.">
        <title>Genome sequence of the chlorinated compound-respiring bacterium Dehalococcoides species strain CBDB1.</title>
        <authorList>
            <person name="Kube M."/>
            <person name="Beck A."/>
            <person name="Zinder S.H."/>
            <person name="Kuhl H."/>
            <person name="Reinhardt R."/>
            <person name="Adrian L."/>
        </authorList>
    </citation>
    <scope>NUCLEOTIDE SEQUENCE [LARGE SCALE GENOMIC DNA]</scope>
    <source>
        <strain>CBDB1</strain>
    </source>
</reference>
<dbReference type="EC" id="3.6.5.-" evidence="1"/>
<dbReference type="EMBL" id="AJ965256">
    <property type="protein sequence ID" value="CAI82281.1"/>
    <property type="molecule type" value="Genomic_DNA"/>
</dbReference>
<dbReference type="SMR" id="Q3ZW89"/>
<dbReference type="KEGG" id="deh:cbdbA2"/>
<dbReference type="HOGENOM" id="CLU_011747_2_1_0"/>
<dbReference type="Proteomes" id="UP000000433">
    <property type="component" value="Chromosome"/>
</dbReference>
<dbReference type="GO" id="GO:0005737">
    <property type="term" value="C:cytoplasm"/>
    <property type="evidence" value="ECO:0007669"/>
    <property type="project" value="UniProtKB-SubCell"/>
</dbReference>
<dbReference type="GO" id="GO:0005525">
    <property type="term" value="F:GTP binding"/>
    <property type="evidence" value="ECO:0007669"/>
    <property type="project" value="UniProtKB-UniRule"/>
</dbReference>
<dbReference type="GO" id="GO:0003924">
    <property type="term" value="F:GTPase activity"/>
    <property type="evidence" value="ECO:0007669"/>
    <property type="project" value="UniProtKB-UniRule"/>
</dbReference>
<dbReference type="GO" id="GO:0000287">
    <property type="term" value="F:magnesium ion binding"/>
    <property type="evidence" value="ECO:0007669"/>
    <property type="project" value="InterPro"/>
</dbReference>
<dbReference type="GO" id="GO:0042254">
    <property type="term" value="P:ribosome biogenesis"/>
    <property type="evidence" value="ECO:0007669"/>
    <property type="project" value="UniProtKB-UniRule"/>
</dbReference>
<dbReference type="CDD" id="cd01898">
    <property type="entry name" value="Obg"/>
    <property type="match status" value="1"/>
</dbReference>
<dbReference type="FunFam" id="2.70.210.12:FF:000001">
    <property type="entry name" value="GTPase Obg"/>
    <property type="match status" value="1"/>
</dbReference>
<dbReference type="Gene3D" id="3.30.300.350">
    <property type="entry name" value="GTP-binding protein OBG, C-terminal domain"/>
    <property type="match status" value="1"/>
</dbReference>
<dbReference type="Gene3D" id="2.70.210.12">
    <property type="entry name" value="GTP1/OBG domain"/>
    <property type="match status" value="1"/>
</dbReference>
<dbReference type="Gene3D" id="3.40.50.300">
    <property type="entry name" value="P-loop containing nucleotide triphosphate hydrolases"/>
    <property type="match status" value="1"/>
</dbReference>
<dbReference type="HAMAP" id="MF_01454">
    <property type="entry name" value="GTPase_Obg"/>
    <property type="match status" value="1"/>
</dbReference>
<dbReference type="InterPro" id="IPR031167">
    <property type="entry name" value="G_OBG"/>
</dbReference>
<dbReference type="InterPro" id="IPR006073">
    <property type="entry name" value="GTP-bd"/>
</dbReference>
<dbReference type="InterPro" id="IPR014100">
    <property type="entry name" value="GTP-bd_Obg/CgtA"/>
</dbReference>
<dbReference type="InterPro" id="IPR036346">
    <property type="entry name" value="GTP-bd_prot_GTP1/OBG_C_sf"/>
</dbReference>
<dbReference type="InterPro" id="IPR006169">
    <property type="entry name" value="GTP1_OBG_dom"/>
</dbReference>
<dbReference type="InterPro" id="IPR036726">
    <property type="entry name" value="GTP1_OBG_dom_sf"/>
</dbReference>
<dbReference type="InterPro" id="IPR045086">
    <property type="entry name" value="OBG_GTPase"/>
</dbReference>
<dbReference type="InterPro" id="IPR015349">
    <property type="entry name" value="OCT_dom"/>
</dbReference>
<dbReference type="InterPro" id="IPR027417">
    <property type="entry name" value="P-loop_NTPase"/>
</dbReference>
<dbReference type="NCBIfam" id="TIGR02729">
    <property type="entry name" value="Obg_CgtA"/>
    <property type="match status" value="1"/>
</dbReference>
<dbReference type="NCBIfam" id="TIGR03595">
    <property type="entry name" value="Obg_CgtA_exten"/>
    <property type="match status" value="1"/>
</dbReference>
<dbReference type="NCBIfam" id="NF008954">
    <property type="entry name" value="PRK12296.1"/>
    <property type="match status" value="1"/>
</dbReference>
<dbReference type="NCBIfam" id="NF008955">
    <property type="entry name" value="PRK12297.1"/>
    <property type="match status" value="1"/>
</dbReference>
<dbReference type="NCBIfam" id="NF008956">
    <property type="entry name" value="PRK12299.1"/>
    <property type="match status" value="1"/>
</dbReference>
<dbReference type="PANTHER" id="PTHR11702">
    <property type="entry name" value="DEVELOPMENTALLY REGULATED GTP-BINDING PROTEIN-RELATED"/>
    <property type="match status" value="1"/>
</dbReference>
<dbReference type="PANTHER" id="PTHR11702:SF31">
    <property type="entry name" value="MITOCHONDRIAL RIBOSOME-ASSOCIATED GTPASE 2"/>
    <property type="match status" value="1"/>
</dbReference>
<dbReference type="Pfam" id="PF09269">
    <property type="entry name" value="DUF1967"/>
    <property type="match status" value="1"/>
</dbReference>
<dbReference type="Pfam" id="PF01018">
    <property type="entry name" value="GTP1_OBG"/>
    <property type="match status" value="1"/>
</dbReference>
<dbReference type="Pfam" id="PF01926">
    <property type="entry name" value="MMR_HSR1"/>
    <property type="match status" value="1"/>
</dbReference>
<dbReference type="PRINTS" id="PR00326">
    <property type="entry name" value="GTP1OBG"/>
</dbReference>
<dbReference type="SUPFAM" id="SSF102741">
    <property type="entry name" value="Obg GTP-binding protein C-terminal domain"/>
    <property type="match status" value="1"/>
</dbReference>
<dbReference type="SUPFAM" id="SSF82051">
    <property type="entry name" value="Obg GTP-binding protein N-terminal domain"/>
    <property type="match status" value="1"/>
</dbReference>
<dbReference type="SUPFAM" id="SSF52540">
    <property type="entry name" value="P-loop containing nucleoside triphosphate hydrolases"/>
    <property type="match status" value="1"/>
</dbReference>
<dbReference type="PROSITE" id="PS51710">
    <property type="entry name" value="G_OBG"/>
    <property type="match status" value="1"/>
</dbReference>
<dbReference type="PROSITE" id="PS51883">
    <property type="entry name" value="OBG"/>
    <property type="match status" value="1"/>
</dbReference>
<dbReference type="PROSITE" id="PS51881">
    <property type="entry name" value="OCT"/>
    <property type="match status" value="1"/>
</dbReference>
<evidence type="ECO:0000255" key="1">
    <source>
        <dbReference type="HAMAP-Rule" id="MF_01454"/>
    </source>
</evidence>
<evidence type="ECO:0000255" key="2">
    <source>
        <dbReference type="PROSITE-ProRule" id="PRU01229"/>
    </source>
</evidence>
<evidence type="ECO:0000255" key="3">
    <source>
        <dbReference type="PROSITE-ProRule" id="PRU01231"/>
    </source>
</evidence>
<proteinExistence type="inferred from homology"/>
<feature type="chain" id="PRO_0000385877" description="GTPase Obg">
    <location>
        <begin position="1"/>
        <end position="424"/>
    </location>
</feature>
<feature type="domain" description="Obg" evidence="3">
    <location>
        <begin position="1"/>
        <end position="160"/>
    </location>
</feature>
<feature type="domain" description="OBG-type G" evidence="1">
    <location>
        <begin position="161"/>
        <end position="328"/>
    </location>
</feature>
<feature type="domain" description="OCT" evidence="2">
    <location>
        <begin position="349"/>
        <end position="424"/>
    </location>
</feature>
<feature type="binding site" evidence="1">
    <location>
        <begin position="167"/>
        <end position="174"/>
    </location>
    <ligand>
        <name>GTP</name>
        <dbReference type="ChEBI" id="CHEBI:37565"/>
    </ligand>
</feature>
<feature type="binding site" evidence="1">
    <location>
        <position position="174"/>
    </location>
    <ligand>
        <name>Mg(2+)</name>
        <dbReference type="ChEBI" id="CHEBI:18420"/>
    </ligand>
</feature>
<feature type="binding site" evidence="1">
    <location>
        <begin position="192"/>
        <end position="196"/>
    </location>
    <ligand>
        <name>GTP</name>
        <dbReference type="ChEBI" id="CHEBI:37565"/>
    </ligand>
</feature>
<feature type="binding site" evidence="1">
    <location>
        <position position="194"/>
    </location>
    <ligand>
        <name>Mg(2+)</name>
        <dbReference type="ChEBI" id="CHEBI:18420"/>
    </ligand>
</feature>
<feature type="binding site" evidence="1">
    <location>
        <begin position="213"/>
        <end position="216"/>
    </location>
    <ligand>
        <name>GTP</name>
        <dbReference type="ChEBI" id="CHEBI:37565"/>
    </ligand>
</feature>
<feature type="binding site" evidence="1">
    <location>
        <begin position="280"/>
        <end position="283"/>
    </location>
    <ligand>
        <name>GTP</name>
        <dbReference type="ChEBI" id="CHEBI:37565"/>
    </ligand>
</feature>
<feature type="binding site" evidence="1">
    <location>
        <begin position="309"/>
        <end position="311"/>
    </location>
    <ligand>
        <name>GTP</name>
        <dbReference type="ChEBI" id="CHEBI:37565"/>
    </ligand>
</feature>
<gene>
    <name evidence="1" type="primary">obg</name>
    <name type="ordered locus">cbdbA2</name>
</gene>
<comment type="function">
    <text evidence="1">An essential GTPase which binds GTP, GDP and possibly (p)ppGpp with moderate affinity, with high nucleotide exchange rates and a fairly low GTP hydrolysis rate. Plays a role in control of the cell cycle, stress response, ribosome biogenesis and in those bacteria that undergo differentiation, in morphogenesis control.</text>
</comment>
<comment type="cofactor">
    <cofactor evidence="1">
        <name>Mg(2+)</name>
        <dbReference type="ChEBI" id="CHEBI:18420"/>
    </cofactor>
</comment>
<comment type="subunit">
    <text evidence="1">Monomer.</text>
</comment>
<comment type="subcellular location">
    <subcellularLocation>
        <location evidence="1">Cytoplasm</location>
    </subcellularLocation>
</comment>
<comment type="similarity">
    <text evidence="1">Belongs to the TRAFAC class OBG-HflX-like GTPase superfamily. OBG GTPase family.</text>
</comment>